<organism>
    <name type="scientific">Rattus norvegicus</name>
    <name type="common">Rat</name>
    <dbReference type="NCBI Taxonomy" id="10116"/>
    <lineage>
        <taxon>Eukaryota</taxon>
        <taxon>Metazoa</taxon>
        <taxon>Chordata</taxon>
        <taxon>Craniata</taxon>
        <taxon>Vertebrata</taxon>
        <taxon>Euteleostomi</taxon>
        <taxon>Mammalia</taxon>
        <taxon>Eutheria</taxon>
        <taxon>Euarchontoglires</taxon>
        <taxon>Glires</taxon>
        <taxon>Rodentia</taxon>
        <taxon>Myomorpha</taxon>
        <taxon>Muroidea</taxon>
        <taxon>Muridae</taxon>
        <taxon>Murinae</taxon>
        <taxon>Rattus</taxon>
    </lineage>
</organism>
<reference key="1">
    <citation type="submission" date="2000-09" db="EMBL/GenBank/DDBJ databases">
        <authorList>
            <person name="Hanson B.J."/>
            <person name="Hong W."/>
        </authorList>
    </citation>
    <scope>NUCLEOTIDE SEQUENCE [MRNA]</scope>
</reference>
<reference key="2">
    <citation type="journal article" date="2004" name="Genome Res.">
        <title>The status, quality, and expansion of the NIH full-length cDNA project: the Mammalian Gene Collection (MGC).</title>
        <authorList>
            <consortium name="The MGC Project Team"/>
        </authorList>
    </citation>
    <scope>NUCLEOTIDE SEQUENCE [LARGE SCALE MRNA]</scope>
    <source>
        <tissue>Pituitary</tissue>
    </source>
</reference>
<reference key="3">
    <citation type="journal article" date="2004" name="J. Cell Sci.">
        <title>Sorting nexin 16 regulates EGF receptor trafficking by phosphatidylinositol-3-phosphate interaction with the Phox domain.</title>
        <authorList>
            <person name="Choi J.H."/>
            <person name="Hong W.P."/>
            <person name="Kim M.J."/>
            <person name="Kim J.H."/>
            <person name="Ryu S.H."/>
            <person name="Suh P.G."/>
        </authorList>
    </citation>
    <scope>FUNCTION</scope>
    <scope>SUBCELLULAR LOCATION</scope>
    <scope>DOMAIN PX</scope>
    <scope>MUTAGENESIS OF TYR-145</scope>
    <scope>SUBUNIT</scope>
    <scope>INTERACTION WITH EGFR</scope>
</reference>
<reference key="4">
    <citation type="journal article" date="2012" name="Nat. Commun.">
        <title>Quantitative maps of protein phosphorylation sites across 14 different rat organs and tissues.</title>
        <authorList>
            <person name="Lundby A."/>
            <person name="Secher A."/>
            <person name="Lage K."/>
            <person name="Nordsborg N.B."/>
            <person name="Dmytriyev A."/>
            <person name="Lundby C."/>
            <person name="Olsen J.V."/>
        </authorList>
    </citation>
    <scope>IDENTIFICATION BY MASS SPECTROMETRY [LARGE SCALE ANALYSIS]</scope>
</reference>
<dbReference type="EMBL" id="AF305780">
    <property type="protein sequence ID" value="AAG25677.1"/>
    <property type="molecule type" value="mRNA"/>
</dbReference>
<dbReference type="EMBL" id="BC061554">
    <property type="protein sequence ID" value="AAH61554.1"/>
    <property type="molecule type" value="mRNA"/>
</dbReference>
<dbReference type="RefSeq" id="NP_071625.2">
    <property type="nucleotide sequence ID" value="NM_022289.3"/>
</dbReference>
<dbReference type="SMR" id="P57769"/>
<dbReference type="FunCoup" id="P57769">
    <property type="interactions" value="2919"/>
</dbReference>
<dbReference type="STRING" id="10116.ENSRNOP00000068566"/>
<dbReference type="PhosphoSitePlus" id="P57769"/>
<dbReference type="PaxDb" id="10116-ENSRNOP00000041690"/>
<dbReference type="Ensembl" id="ENSRNOT00000083909.2">
    <property type="protein sequence ID" value="ENSRNOP00000068566.2"/>
    <property type="gene ID" value="ENSRNOG00000009953.8"/>
</dbReference>
<dbReference type="GeneID" id="64088"/>
<dbReference type="KEGG" id="rno:64088"/>
<dbReference type="UCSC" id="RGD:620295">
    <property type="organism name" value="rat"/>
</dbReference>
<dbReference type="AGR" id="RGD:620295"/>
<dbReference type="CTD" id="64089"/>
<dbReference type="RGD" id="620295">
    <property type="gene designation" value="Snx16"/>
</dbReference>
<dbReference type="eggNOG" id="KOG2101">
    <property type="taxonomic scope" value="Eukaryota"/>
</dbReference>
<dbReference type="GeneTree" id="ENSGT00390000005651"/>
<dbReference type="HOGENOM" id="CLU_069154_0_0_1"/>
<dbReference type="InParanoid" id="P57769"/>
<dbReference type="OMA" id="NWEDRPA"/>
<dbReference type="OrthoDB" id="76516at2759"/>
<dbReference type="PhylomeDB" id="P57769"/>
<dbReference type="PRO" id="PR:P57769"/>
<dbReference type="Proteomes" id="UP000002494">
    <property type="component" value="Chromosome 2"/>
</dbReference>
<dbReference type="Bgee" id="ENSRNOG00000009953">
    <property type="expression patterns" value="Expressed in cerebellum and 20 other cell types or tissues"/>
</dbReference>
<dbReference type="ExpressionAtlas" id="P57769">
    <property type="expression patterns" value="baseline and differential"/>
</dbReference>
<dbReference type="GO" id="GO:0005769">
    <property type="term" value="C:early endosome"/>
    <property type="evidence" value="ECO:0000250"/>
    <property type="project" value="UniProtKB"/>
</dbReference>
<dbReference type="GO" id="GO:0031901">
    <property type="term" value="C:early endosome membrane"/>
    <property type="evidence" value="ECO:0007669"/>
    <property type="project" value="UniProtKB-SubCell"/>
</dbReference>
<dbReference type="GO" id="GO:0010008">
    <property type="term" value="C:endosome membrane"/>
    <property type="evidence" value="ECO:0000250"/>
    <property type="project" value="UniProtKB"/>
</dbReference>
<dbReference type="GO" id="GO:0005770">
    <property type="term" value="C:late endosome"/>
    <property type="evidence" value="ECO:0000250"/>
    <property type="project" value="UniProtKB"/>
</dbReference>
<dbReference type="GO" id="GO:0031902">
    <property type="term" value="C:late endosome membrane"/>
    <property type="evidence" value="ECO:0007669"/>
    <property type="project" value="UniProtKB-SubCell"/>
</dbReference>
<dbReference type="GO" id="GO:0005764">
    <property type="term" value="C:lysosome"/>
    <property type="evidence" value="ECO:0007669"/>
    <property type="project" value="UniProtKB-SubCell"/>
</dbReference>
<dbReference type="GO" id="GO:0042802">
    <property type="term" value="F:identical protein binding"/>
    <property type="evidence" value="ECO:0000266"/>
    <property type="project" value="RGD"/>
</dbReference>
<dbReference type="GO" id="GO:0035091">
    <property type="term" value="F:phosphatidylinositol binding"/>
    <property type="evidence" value="ECO:0000250"/>
    <property type="project" value="UniProtKB"/>
</dbReference>
<dbReference type="GO" id="GO:0045022">
    <property type="term" value="P:early endosome to late endosome transport"/>
    <property type="evidence" value="ECO:0000314"/>
    <property type="project" value="RGD"/>
</dbReference>
<dbReference type="GO" id="GO:0008333">
    <property type="term" value="P:endosome to lysosome transport"/>
    <property type="evidence" value="ECO:0000250"/>
    <property type="project" value="UniProtKB"/>
</dbReference>
<dbReference type="GO" id="GO:0006622">
    <property type="term" value="P:protein targeting to lysosome"/>
    <property type="evidence" value="ECO:0000250"/>
    <property type="project" value="UniProtKB"/>
</dbReference>
<dbReference type="GO" id="GO:0001881">
    <property type="term" value="P:receptor recycling"/>
    <property type="evidence" value="ECO:0000318"/>
    <property type="project" value="GO_Central"/>
</dbReference>
<dbReference type="CDD" id="cd07276">
    <property type="entry name" value="PX_SNX16"/>
    <property type="match status" value="1"/>
</dbReference>
<dbReference type="FunFam" id="3.30.1520.10:FF:000011">
    <property type="entry name" value="Putative sorting nexin-16"/>
    <property type="match status" value="1"/>
</dbReference>
<dbReference type="Gene3D" id="3.30.1520.10">
    <property type="entry name" value="Phox-like domain"/>
    <property type="match status" value="1"/>
</dbReference>
<dbReference type="InterPro" id="IPR001683">
    <property type="entry name" value="PX_dom"/>
</dbReference>
<dbReference type="InterPro" id="IPR036871">
    <property type="entry name" value="PX_dom_sf"/>
</dbReference>
<dbReference type="InterPro" id="IPR037911">
    <property type="entry name" value="SNX16_PX"/>
</dbReference>
<dbReference type="InterPro" id="IPR051837">
    <property type="entry name" value="SortingNexin/PXDomain-PKLike"/>
</dbReference>
<dbReference type="PANTHER" id="PTHR22999">
    <property type="entry name" value="PX SERINE/THREONINE KINASE PXK"/>
    <property type="match status" value="1"/>
</dbReference>
<dbReference type="PANTHER" id="PTHR22999:SF23">
    <property type="entry name" value="SORTING NEXIN-16"/>
    <property type="match status" value="1"/>
</dbReference>
<dbReference type="Pfam" id="PF00787">
    <property type="entry name" value="PX"/>
    <property type="match status" value="1"/>
</dbReference>
<dbReference type="SMART" id="SM00312">
    <property type="entry name" value="PX"/>
    <property type="match status" value="1"/>
</dbReference>
<dbReference type="SUPFAM" id="SSF64268">
    <property type="entry name" value="PX domain"/>
    <property type="match status" value="1"/>
</dbReference>
<dbReference type="PROSITE" id="PS50195">
    <property type="entry name" value="PX"/>
    <property type="match status" value="1"/>
</dbReference>
<protein>
    <recommendedName>
        <fullName>Sorting nexin-16</fullName>
    </recommendedName>
</protein>
<name>SNX16_RAT</name>
<sequence length="344" mass="38848">MATPYVPVPMPIGNSASSFTNNRNQRSSSFGSVSTSSNSSKGQLEDSSVGTCKHTNVQDQMDSASSVCGSPLIRTKFTGTDSSIEYSARPRDTEEQHPDALNWEDRPSTPTILGYEVMEERAKFTVYKILVKKSPEESWVVFRRYTDFSRLNDKLKEMFPGFRLALPPKRWFKDNYNADFLEDRQLGLQAFLQNLVAHKDIANCLAVREFLCLDDPPGPFDSLEESRAFCETLEETNYHLQRELLEKQKEVESLKKLLGEKQLHIDALETRIRTLSLEPGASLYVSRAEGGQILRVQSSVLQVNRDVLDEESRADHKPHFNSREAGSAIADIEVAQLAYNAEDD</sequence>
<feature type="chain" id="PRO_0000213864" description="Sorting nexin-16">
    <location>
        <begin position="1"/>
        <end position="344"/>
    </location>
</feature>
<feature type="domain" description="PX" evidence="4">
    <location>
        <begin position="105"/>
        <end position="218"/>
    </location>
</feature>
<feature type="region of interest" description="Disordered" evidence="5">
    <location>
        <begin position="1"/>
        <end position="49"/>
    </location>
</feature>
<feature type="region of interest" description="Disordered" evidence="5">
    <location>
        <begin position="83"/>
        <end position="105"/>
    </location>
</feature>
<feature type="coiled-coil region" evidence="3">
    <location>
        <begin position="223"/>
        <end position="278"/>
    </location>
</feature>
<feature type="compositionally biased region" description="Pro residues" evidence="5">
    <location>
        <begin position="1"/>
        <end position="10"/>
    </location>
</feature>
<feature type="compositionally biased region" description="Polar residues" evidence="5">
    <location>
        <begin position="14"/>
        <end position="26"/>
    </location>
</feature>
<feature type="compositionally biased region" description="Low complexity" evidence="5">
    <location>
        <begin position="27"/>
        <end position="40"/>
    </location>
</feature>
<feature type="compositionally biased region" description="Basic and acidic residues" evidence="5">
    <location>
        <begin position="88"/>
        <end position="105"/>
    </location>
</feature>
<feature type="binding site" evidence="1">
    <location>
        <position position="144"/>
    </location>
    <ligand>
        <name>a 1,2-diacyl-sn-glycero-3-phospho-(1D-myo-inositol-3-phosphate)</name>
        <dbReference type="ChEBI" id="CHEBI:58088"/>
    </ligand>
</feature>
<feature type="binding site" evidence="1">
    <location>
        <position position="146"/>
    </location>
    <ligand>
        <name>a 1,2-diacyl-sn-glycero-3-phospho-(1D-myo-inositol-3-phosphate)</name>
        <dbReference type="ChEBI" id="CHEBI:58088"/>
    </ligand>
</feature>
<feature type="binding site" evidence="1">
    <location>
        <position position="184"/>
    </location>
    <ligand>
        <name>a 1,2-diacyl-sn-glycero-3-phospho-(1D-myo-inositol-3-phosphate)</name>
        <dbReference type="ChEBI" id="CHEBI:58088"/>
    </ligand>
</feature>
<feature type="modified residue" description="Phosphoserine" evidence="2">
    <location>
        <position position="222"/>
    </location>
</feature>
<feature type="mutagenesis site" description="Abolishes binding to phosphatidylinositol 3-phosphate." evidence="6">
    <original>Y</original>
    <variation>A</variation>
    <location>
        <position position="145"/>
    </location>
</feature>
<feature type="sequence conflict" description="In Ref. 1; AAG25677." evidence="7" ref="1">
    <original>N</original>
    <variation>D</variation>
    <location>
        <position position="14"/>
    </location>
</feature>
<feature type="sequence conflict" description="In Ref. 1; AAG25677." evidence="7" ref="1">
    <original>K</original>
    <variation>R</variation>
    <location>
        <position position="53"/>
    </location>
</feature>
<feature type="sequence conflict" description="In Ref. 2; AAH61554." evidence="7" ref="2">
    <original>K</original>
    <variation>E</variation>
    <location>
        <position position="133"/>
    </location>
</feature>
<feature type="sequence conflict" description="In Ref. 1; AAG25677." evidence="7" ref="1">
    <original>L</original>
    <variation>R</variation>
    <location>
        <position position="245"/>
    </location>
</feature>
<evidence type="ECO:0000250" key="1"/>
<evidence type="ECO:0000250" key="2">
    <source>
        <dbReference type="UniProtKB" id="Q8C080"/>
    </source>
</evidence>
<evidence type="ECO:0000255" key="3"/>
<evidence type="ECO:0000255" key="4">
    <source>
        <dbReference type="PROSITE-ProRule" id="PRU00147"/>
    </source>
</evidence>
<evidence type="ECO:0000256" key="5">
    <source>
        <dbReference type="SAM" id="MobiDB-lite"/>
    </source>
</evidence>
<evidence type="ECO:0000269" key="6">
    <source>
    </source>
</evidence>
<evidence type="ECO:0000305" key="7"/>
<gene>
    <name type="primary">Snx16</name>
</gene>
<comment type="function">
    <text evidence="6">May be involved in several stages of intracellular trafficking. Plays a role in protein transport from early to late endosomes. Plays a role in protein transport to the lysosome. Promotes degradation of EGFR after EGF signaling.</text>
</comment>
<comment type="subunit">
    <text evidence="6">Homooligomer. Interacts with EGFR.</text>
</comment>
<comment type="subcellular location">
    <subcellularLocation>
        <location evidence="6">Early endosome membrane</location>
        <topology evidence="6">Peripheral membrane protein</topology>
        <orientation evidence="6">Cytoplasmic side</orientation>
    </subcellularLocation>
    <subcellularLocation>
        <location evidence="6">Late endosome membrane</location>
        <topology evidence="6">Peripheral membrane protein</topology>
        <orientation evidence="6">Cytoplasmic side</orientation>
    </subcellularLocation>
    <subcellularLocation>
        <location evidence="6">Cytoplasm</location>
    </subcellularLocation>
    <subcellularLocation>
        <location evidence="6">Lysosome</location>
    </subcellularLocation>
</comment>
<comment type="domain">
    <text evidence="6">The PX domain mediates interaction with membranes enriched in phosphatidylinositol 3-phosphate.</text>
</comment>
<comment type="similarity">
    <text evidence="7">Belongs to the sorting nexin family.</text>
</comment>
<proteinExistence type="evidence at protein level"/>
<accession>P57769</accession>
<accession>Q6P7R2</accession>
<keyword id="KW-0175">Coiled coil</keyword>
<keyword id="KW-0963">Cytoplasm</keyword>
<keyword id="KW-0967">Endosome</keyword>
<keyword id="KW-0446">Lipid-binding</keyword>
<keyword id="KW-0458">Lysosome</keyword>
<keyword id="KW-0472">Membrane</keyword>
<keyword id="KW-0597">Phosphoprotein</keyword>
<keyword id="KW-0653">Protein transport</keyword>
<keyword id="KW-1185">Reference proteome</keyword>
<keyword id="KW-0813">Transport</keyword>